<sequence>MELRLYDTLTRDKRPFTPIDPANVRMYVCGPTVYDFAHIGNARPVIVFDVLFRLLRHLYGEAHVKYVRNITDVDDKINDRAARDYPGLPLNEAIRKVTEQTERQFHDDVDALGCLRPTVEPRATEHIGEMRSIIEKLVAGGFAYVEQDHVLFSPSAMNAANGVLPRYGSLANRSLDEMIAGARVDVAPYKRDATDFVLWKPSKPGEPSWPSPAGIATPGRPGWHIECSAMSWKHLGETFDIHGGGIDLVFPHHENEVAQSCCAFHTERMAQTWMHNGFLQVEGEKMSKSLGNFITIRELLATNKFGGRSWDGATLRLAMLKTHYRQPIDWTVDALHEAEKAILDWSDFAKDATPVRCDEVIAALTDDLNTPKMIAELHALRRAGKADELRGAMQLLGINPVVRAPVDLDATAKSLIEARTAARANKDWKESDRIRDELAAMGVVLKDGKDADGKSVTTWELAR</sequence>
<accession>Q6N8A7</accession>
<evidence type="ECO:0000255" key="1">
    <source>
        <dbReference type="HAMAP-Rule" id="MF_00041"/>
    </source>
</evidence>
<organism>
    <name type="scientific">Rhodopseudomonas palustris (strain ATCC BAA-98 / CGA009)</name>
    <dbReference type="NCBI Taxonomy" id="258594"/>
    <lineage>
        <taxon>Bacteria</taxon>
        <taxon>Pseudomonadati</taxon>
        <taxon>Pseudomonadota</taxon>
        <taxon>Alphaproteobacteria</taxon>
        <taxon>Hyphomicrobiales</taxon>
        <taxon>Nitrobacteraceae</taxon>
        <taxon>Rhodopseudomonas</taxon>
    </lineage>
</organism>
<comment type="catalytic activity">
    <reaction evidence="1">
        <text>tRNA(Cys) + L-cysteine + ATP = L-cysteinyl-tRNA(Cys) + AMP + diphosphate</text>
        <dbReference type="Rhea" id="RHEA:17773"/>
        <dbReference type="Rhea" id="RHEA-COMP:9661"/>
        <dbReference type="Rhea" id="RHEA-COMP:9679"/>
        <dbReference type="ChEBI" id="CHEBI:30616"/>
        <dbReference type="ChEBI" id="CHEBI:33019"/>
        <dbReference type="ChEBI" id="CHEBI:35235"/>
        <dbReference type="ChEBI" id="CHEBI:78442"/>
        <dbReference type="ChEBI" id="CHEBI:78517"/>
        <dbReference type="ChEBI" id="CHEBI:456215"/>
        <dbReference type="EC" id="6.1.1.16"/>
    </reaction>
</comment>
<comment type="cofactor">
    <cofactor evidence="1">
        <name>Zn(2+)</name>
        <dbReference type="ChEBI" id="CHEBI:29105"/>
    </cofactor>
    <text evidence="1">Binds 1 zinc ion per subunit.</text>
</comment>
<comment type="subunit">
    <text evidence="1">Monomer.</text>
</comment>
<comment type="subcellular location">
    <subcellularLocation>
        <location evidence="1">Cytoplasm</location>
    </subcellularLocation>
</comment>
<comment type="similarity">
    <text evidence="1">Belongs to the class-I aminoacyl-tRNA synthetase family.</text>
</comment>
<dbReference type="EC" id="6.1.1.16" evidence="1"/>
<dbReference type="EMBL" id="BX572599">
    <property type="protein sequence ID" value="CAE27438.1"/>
    <property type="molecule type" value="Genomic_DNA"/>
</dbReference>
<dbReference type="RefSeq" id="WP_011157552.1">
    <property type="nucleotide sequence ID" value="NZ_CP116810.1"/>
</dbReference>
<dbReference type="SMR" id="Q6N8A7"/>
<dbReference type="STRING" id="258594.RPA1997"/>
<dbReference type="GeneID" id="66893041"/>
<dbReference type="eggNOG" id="COG0215">
    <property type="taxonomic scope" value="Bacteria"/>
</dbReference>
<dbReference type="HOGENOM" id="CLU_013528_0_1_5"/>
<dbReference type="PhylomeDB" id="Q6N8A7"/>
<dbReference type="GO" id="GO:0005829">
    <property type="term" value="C:cytosol"/>
    <property type="evidence" value="ECO:0007669"/>
    <property type="project" value="TreeGrafter"/>
</dbReference>
<dbReference type="GO" id="GO:0005524">
    <property type="term" value="F:ATP binding"/>
    <property type="evidence" value="ECO:0007669"/>
    <property type="project" value="UniProtKB-UniRule"/>
</dbReference>
<dbReference type="GO" id="GO:0004817">
    <property type="term" value="F:cysteine-tRNA ligase activity"/>
    <property type="evidence" value="ECO:0007669"/>
    <property type="project" value="UniProtKB-UniRule"/>
</dbReference>
<dbReference type="GO" id="GO:0008270">
    <property type="term" value="F:zinc ion binding"/>
    <property type="evidence" value="ECO:0007669"/>
    <property type="project" value="UniProtKB-UniRule"/>
</dbReference>
<dbReference type="GO" id="GO:0006423">
    <property type="term" value="P:cysteinyl-tRNA aminoacylation"/>
    <property type="evidence" value="ECO:0007669"/>
    <property type="project" value="UniProtKB-UniRule"/>
</dbReference>
<dbReference type="CDD" id="cd00672">
    <property type="entry name" value="CysRS_core"/>
    <property type="match status" value="1"/>
</dbReference>
<dbReference type="FunFam" id="3.40.50.620:FF:000068">
    <property type="entry name" value="Cysteine--tRNA ligase"/>
    <property type="match status" value="1"/>
</dbReference>
<dbReference type="Gene3D" id="3.40.50.620">
    <property type="entry name" value="HUPs"/>
    <property type="match status" value="1"/>
</dbReference>
<dbReference type="HAMAP" id="MF_00041">
    <property type="entry name" value="Cys_tRNA_synth"/>
    <property type="match status" value="1"/>
</dbReference>
<dbReference type="InterPro" id="IPR015803">
    <property type="entry name" value="Cys-tRNA-ligase"/>
</dbReference>
<dbReference type="InterPro" id="IPR015273">
    <property type="entry name" value="Cys-tRNA-synt_Ia_DALR"/>
</dbReference>
<dbReference type="InterPro" id="IPR024909">
    <property type="entry name" value="Cys-tRNA/MSH_ligase"/>
</dbReference>
<dbReference type="InterPro" id="IPR056411">
    <property type="entry name" value="CysS_C"/>
</dbReference>
<dbReference type="InterPro" id="IPR014729">
    <property type="entry name" value="Rossmann-like_a/b/a_fold"/>
</dbReference>
<dbReference type="InterPro" id="IPR032678">
    <property type="entry name" value="tRNA-synt_1_cat_dom"/>
</dbReference>
<dbReference type="InterPro" id="IPR009080">
    <property type="entry name" value="tRNAsynth_Ia_anticodon-bd"/>
</dbReference>
<dbReference type="NCBIfam" id="TIGR00435">
    <property type="entry name" value="cysS"/>
    <property type="match status" value="1"/>
</dbReference>
<dbReference type="PANTHER" id="PTHR10890:SF3">
    <property type="entry name" value="CYSTEINE--TRNA LIGASE, CYTOPLASMIC"/>
    <property type="match status" value="1"/>
</dbReference>
<dbReference type="PANTHER" id="PTHR10890">
    <property type="entry name" value="CYSTEINYL-TRNA SYNTHETASE"/>
    <property type="match status" value="1"/>
</dbReference>
<dbReference type="Pfam" id="PF23493">
    <property type="entry name" value="CysS_C"/>
    <property type="match status" value="1"/>
</dbReference>
<dbReference type="Pfam" id="PF01406">
    <property type="entry name" value="tRNA-synt_1e"/>
    <property type="match status" value="1"/>
</dbReference>
<dbReference type="PRINTS" id="PR00983">
    <property type="entry name" value="TRNASYNTHCYS"/>
</dbReference>
<dbReference type="SMART" id="SM00840">
    <property type="entry name" value="DALR_2"/>
    <property type="match status" value="1"/>
</dbReference>
<dbReference type="SUPFAM" id="SSF47323">
    <property type="entry name" value="Anticodon-binding domain of a subclass of class I aminoacyl-tRNA synthetases"/>
    <property type="match status" value="1"/>
</dbReference>
<dbReference type="SUPFAM" id="SSF52374">
    <property type="entry name" value="Nucleotidylyl transferase"/>
    <property type="match status" value="1"/>
</dbReference>
<keyword id="KW-0030">Aminoacyl-tRNA synthetase</keyword>
<keyword id="KW-0067">ATP-binding</keyword>
<keyword id="KW-0963">Cytoplasm</keyword>
<keyword id="KW-0436">Ligase</keyword>
<keyword id="KW-0479">Metal-binding</keyword>
<keyword id="KW-0547">Nucleotide-binding</keyword>
<keyword id="KW-0648">Protein biosynthesis</keyword>
<keyword id="KW-0862">Zinc</keyword>
<protein>
    <recommendedName>
        <fullName evidence="1">Cysteine--tRNA ligase</fullName>
        <ecNumber evidence="1">6.1.1.16</ecNumber>
    </recommendedName>
    <alternativeName>
        <fullName evidence="1">Cysteinyl-tRNA synthetase</fullName>
        <shortName evidence="1">CysRS</shortName>
    </alternativeName>
</protein>
<proteinExistence type="inferred from homology"/>
<feature type="chain" id="PRO_0000159467" description="Cysteine--tRNA ligase">
    <location>
        <begin position="1"/>
        <end position="463"/>
    </location>
</feature>
<feature type="short sequence motif" description="'HIGH' region">
    <location>
        <begin position="31"/>
        <end position="41"/>
    </location>
</feature>
<feature type="short sequence motif" description="'KMSKS' region">
    <location>
        <begin position="285"/>
        <end position="289"/>
    </location>
</feature>
<feature type="binding site" evidence="1">
    <location>
        <position position="29"/>
    </location>
    <ligand>
        <name>Zn(2+)</name>
        <dbReference type="ChEBI" id="CHEBI:29105"/>
    </ligand>
</feature>
<feature type="binding site" evidence="1">
    <location>
        <position position="227"/>
    </location>
    <ligand>
        <name>Zn(2+)</name>
        <dbReference type="ChEBI" id="CHEBI:29105"/>
    </ligand>
</feature>
<feature type="binding site" evidence="1">
    <location>
        <position position="252"/>
    </location>
    <ligand>
        <name>Zn(2+)</name>
        <dbReference type="ChEBI" id="CHEBI:29105"/>
    </ligand>
</feature>
<feature type="binding site" evidence="1">
    <location>
        <position position="256"/>
    </location>
    <ligand>
        <name>Zn(2+)</name>
        <dbReference type="ChEBI" id="CHEBI:29105"/>
    </ligand>
</feature>
<feature type="binding site" evidence="1">
    <location>
        <position position="288"/>
    </location>
    <ligand>
        <name>ATP</name>
        <dbReference type="ChEBI" id="CHEBI:30616"/>
    </ligand>
</feature>
<gene>
    <name evidence="1" type="primary">cysS</name>
    <name type="ordered locus">RPA1997</name>
</gene>
<name>SYC_RHOPA</name>
<reference key="1">
    <citation type="journal article" date="2004" name="Nat. Biotechnol.">
        <title>Complete genome sequence of the metabolically versatile photosynthetic bacterium Rhodopseudomonas palustris.</title>
        <authorList>
            <person name="Larimer F.W."/>
            <person name="Chain P."/>
            <person name="Hauser L."/>
            <person name="Lamerdin J.E."/>
            <person name="Malfatti S."/>
            <person name="Do L."/>
            <person name="Land M.L."/>
            <person name="Pelletier D.A."/>
            <person name="Beatty J.T."/>
            <person name="Lang A.S."/>
            <person name="Tabita F.R."/>
            <person name="Gibson J.L."/>
            <person name="Hanson T.E."/>
            <person name="Bobst C."/>
            <person name="Torres y Torres J.L."/>
            <person name="Peres C."/>
            <person name="Harrison F.H."/>
            <person name="Gibson J."/>
            <person name="Harwood C.S."/>
        </authorList>
    </citation>
    <scope>NUCLEOTIDE SEQUENCE [LARGE SCALE GENOMIC DNA]</scope>
    <source>
        <strain>ATCC BAA-98 / CGA009</strain>
    </source>
</reference>